<name>LRC8A_HUMAN</name>
<comment type="function">
    <text evidence="2 5 6 8 9 10 11 12 13 15 18 19 20 21">Essential component of the volume-regulated anion channel (VRAC, also named VSOAC channel), an anion channel required to maintain a constant cell volume in response to extracellular or intracellular osmotic changes (PubMed:24725410, PubMed:24790029, PubMed:26530471, PubMed:26824658, PubMed:28193731, PubMed:29769723). The VRAC channel conducts iodide better than chloride and can also conduct organic osmolytes like taurine (PubMed:24725410, PubMed:24790029, PubMed:26530471, PubMed:26824658, PubMed:28193731, PubMed:30095067). Mediates efflux of amino acids, such as aspartate and glutamate, in response to osmotic stress (PubMed:28193731). LRRC8A and LRRC8D are required for the uptake of the drug cisplatin (PubMed:26530471). In complex with LRRC8C or LRRC8E, acts as a transporter of immunoreactive cyclic dinucleotide GMP-AMP (2'-3'-cGAMP), an immune messenger produced in response to DNA virus in the cytosol: mediates both import and export of 2'-3'-cGAMP, thereby promoting transfer of 2'-3'-cGAMP to bystander cells (PubMed:33171122). In contrast, complexes containing LRRC8D inhibit transport of 2'-3'-cGAMP (PubMed:33171122). Required for in vivo channel activity, together with at least one other family member (LRRC8B, LRRC8C, LRRC8D or LRRC8E); channel characteristics depend on the precise subunit composition (PubMed:24790029, PubMed:26824658, PubMed:28193731). Can form functional channels by itself (in vitro) (PubMed:26824658). Involved in B-cell development: required for the pro-B cell to pre-B cell transition (PubMed:14660746). Also required for T-cell development (By similarity). Required for myoblast differentiation: VRAC activity promotes membrane hyperpolarization and regulates insulin-stimulated glucose metabolism and oxygen consumption (By similarity). Also acts as a regulator of glucose-sensing in pancreatic beta cells: VRAC currents, generated in response to hypotonicity- or glucose-induced beta cell swelling, depolarize cells, thereby causing electrical excitation, leading to increase glucose sensitivity and insulin secretion (PubMed:29371604). Also plays a role in lysosome homeostasis by forming functional lysosomal VRAC channels in response to low cytoplasmic ionic strength condition: lysosomal VRAC channels are necessary for the formation of large lysosome-derived vacuoles, which store and then expel excess water to maintain cytosolic water homeostasis (PubMed:31270356, PubMed:33139539). Acts as a key factor in NLRP3 inflammasome activation by modulating itaconate efflux and mitochondria function (PubMed:39909992).</text>
</comment>
<comment type="catalytic activity">
    <reaction evidence="6 8">
        <text>chloride(in) = chloride(out)</text>
        <dbReference type="Rhea" id="RHEA:29823"/>
        <dbReference type="ChEBI" id="CHEBI:17996"/>
    </reaction>
</comment>
<comment type="catalytic activity">
    <reaction evidence="6 8">
        <text>iodide(out) = iodide(in)</text>
        <dbReference type="Rhea" id="RHEA:66324"/>
        <dbReference type="ChEBI" id="CHEBI:16382"/>
    </reaction>
</comment>
<comment type="catalytic activity">
    <reaction evidence="8">
        <text>taurine(out) = taurine(in)</text>
        <dbReference type="Rhea" id="RHEA:66328"/>
        <dbReference type="ChEBI" id="CHEBI:507393"/>
    </reaction>
</comment>
<comment type="catalytic activity">
    <reaction evidence="1">
        <text>L-aspartate(out) = L-aspartate(in)</text>
        <dbReference type="Rhea" id="RHEA:66332"/>
        <dbReference type="ChEBI" id="CHEBI:29991"/>
    </reaction>
</comment>
<comment type="catalytic activity">
    <reaction evidence="32">
        <text>L-glutamate(out) = L-glutamate(in)</text>
        <dbReference type="Rhea" id="RHEA:66336"/>
        <dbReference type="ChEBI" id="CHEBI:29985"/>
    </reaction>
</comment>
<comment type="catalytic activity">
    <reaction evidence="1">
        <text>myo-inositol(out) = myo-inositol(in)</text>
        <dbReference type="Rhea" id="RHEA:32867"/>
        <dbReference type="ChEBI" id="CHEBI:17268"/>
    </reaction>
</comment>
<comment type="catalytic activity">
    <reaction evidence="20">
        <text>2',3'-cGAMP(out) = 2',3'-cGAMP(in)</text>
        <dbReference type="Rhea" id="RHEA:66320"/>
        <dbReference type="ChEBI" id="CHEBI:143093"/>
    </reaction>
    <physiologicalReaction direction="left-to-right" evidence="20">
        <dbReference type="Rhea" id="RHEA:66321"/>
    </physiologicalReaction>
    <physiologicalReaction direction="right-to-left" evidence="20">
        <dbReference type="Rhea" id="RHEA:66322"/>
    </physiologicalReaction>
</comment>
<comment type="activity regulation">
    <text evidence="2">Inhibited by (4-[(2-butyl-6,7-dichloro-2-cyclopentyl-2,3-dihydro-1-oxo-1H-inden-5-yl)oxy]butanoic acid), which plugs the channel like a cork in a bottle by binding in the extracellular selectivity filter and sterically occluding ion conduction (By similarity). Lipids may block conduction in closed heterohexameric channels (By similarity).</text>
</comment>
<comment type="subunit">
    <text evidence="2 7 8 10 11 15 16 21 30">Heterohexamer; oligomerizes with other LRRC8 proteins (LRRC8B, LRRC8C, LRRC8D and/or LRRC8E) to form a heterohexamer (PubMed:24782309, PubMed:24790029, PubMed:26824658, PubMed:28193731, PubMed:30095067, PubMed:30127360). Can form homohexamers in vitro, but these have lower conductance than heterohexamers (PubMed:26824658). In vivo, the subunit composition may depend primarily on expression levels, and heterooligomeric channels containing various proportions of the different LRRC8 proteins may coexist (By similarity). Interact with GRB2 (By similarity). Interacts with NOX4; this interaction prevents the ubiquitin-mediated degradation of LRRC8A (PubMed:39909992).</text>
</comment>
<comment type="interaction">
    <interactant intactId="EBI-10970086">
        <id>Q8IWT6</id>
    </interactant>
    <interactant intactId="EBI-10970086">
        <id>Q8IWT6</id>
        <label>LRRC8A</label>
    </interactant>
    <organismsDiffer>false</organismsDiffer>
    <experiments>4</experiments>
</comment>
<comment type="interaction">
    <interactant intactId="EBI-10970086">
        <id>Q8IWT6</id>
    </interactant>
    <interactant intactId="EBI-9477617">
        <id>Q6P9F7</id>
        <label>LRRC8B</label>
    </interactant>
    <organismsDiffer>false</organismsDiffer>
    <experiments>4</experiments>
</comment>
<comment type="interaction">
    <interactant intactId="EBI-10970086">
        <id>Q8IWT6</id>
    </interactant>
    <interactant intactId="EBI-6916516">
        <id>Q8TDW0</id>
        <label>LRRC8C</label>
    </interactant>
    <organismsDiffer>false</organismsDiffer>
    <experiments>2</experiments>
</comment>
<comment type="interaction">
    <interactant intactId="EBI-10970086">
        <id>Q8IWT6</id>
    </interactant>
    <interactant intactId="EBI-861997">
        <id>Q7L1W4</id>
        <label>LRRC8D</label>
    </interactant>
    <organismsDiffer>false</organismsDiffer>
    <experiments>2</experiments>
</comment>
<comment type="interaction">
    <interactant intactId="EBI-10970086">
        <id>Q8IWT6</id>
    </interactant>
    <interactant intactId="EBI-8647013">
        <id>Q6NSJ5</id>
        <label>LRRC8E</label>
    </interactant>
    <organismsDiffer>false</organismsDiffer>
    <experiments>3</experiments>
</comment>
<comment type="subcellular location">
    <subcellularLocation>
        <location evidence="6 7 8 10 33">Cell membrane</location>
        <topology evidence="6 7 8 15 16">Multi-pass membrane protein</topology>
    </subcellularLocation>
    <subcellularLocation>
        <location evidence="19">Lysosome membrane</location>
        <topology evidence="6 7 8 15 16">Multi-pass membrane protein</topology>
    </subcellularLocation>
    <text evidence="19">Mainly localizes to the cell membrane, with some intracellular localization to lysosomes.</text>
</comment>
<comment type="tissue specificity">
    <text evidence="4 5">Expressed in brain, kidney, ovary, lung, liver, heart, and fetal brain and liver. Found at high levels in bone marrow; lower levels are detected in peripheral blood cells. Expressed on T-cells as well as on B-lineage cells.</text>
</comment>
<comment type="domain">
    <text evidence="15 16">The volume-regulated anion channel (VRAC) channel forms a trimer of dimers, with symmetry mismatch between the pore-forming domain and the cytosolic LRR repeats, a topology similar to gap junction proteins.</text>
</comment>
<comment type="domain">
    <text evidence="19">The di-leucine motif is required for lysosomal localization.</text>
</comment>
<comment type="domain">
    <text evidence="14">The cytoplasmic N-terminus preceding the first transmembrane (residues 1-22) regulates volume-regulated anion channel (VRAC) conductance, ion permeability and inactivation gating.</text>
</comment>
<comment type="PTM">
    <text evidence="8">N-glycosylated.</text>
</comment>
<comment type="disease" evidence="5">
    <disease id="DI-02875">
        <name>Agammaglobulinemia 5, autosomal dominant</name>
        <acronym>AGM5</acronym>
        <description>A primary immunodeficiency characterized by profoundly low or absent serum antibodies and low or absent circulating B-cells due to an early block of B-cell development. Affected individuals develop severe infections in the first years of life.</description>
        <dbReference type="MIM" id="613506"/>
    </disease>
    <text>The disease is caused by variants affecting the gene represented in this entry. A chromosomal aberration involving LRRC8 has been found in a patient with congenital agammaglobulinemia. Translocation t(9;20)(q33.2;q12). The translocation truncates the LRRC8 gene, resulting in deletion of the eighth, ninth, and half of the seventh LRR domains.</text>
</comment>
<comment type="similarity">
    <text evidence="30">Belongs to the LRRC8 family.</text>
</comment>
<comment type="sequence caution" evidence="30">
    <conflict type="erroneous initiation">
        <sequence resource="EMBL-CDS" id="AAQ88653"/>
    </conflict>
</comment>
<comment type="sequence caution" evidence="30">
    <conflict type="erroneous initiation">
        <sequence resource="EMBL-CDS" id="BAA92675"/>
    </conflict>
</comment>
<comment type="sequence caution" evidence="30">
    <conflict type="erroneous initiation">
        <sequence resource="EMBL-CDS" id="BAC11161"/>
    </conflict>
</comment>
<comment type="online information" name="LRRC8Abase">
    <link uri="https://databases.lovd.nl/shared/genes/LRRC8A"/>
    <text>LRRC8A mutation db</text>
</comment>
<reference key="1">
    <citation type="journal article" date="2003" name="J. Clin. Invest.">
        <title>A congenital mutation of the novel gene LRRC8 causes agammaglobulinemia in humans.</title>
        <authorList>
            <person name="Sawada A."/>
            <person name="Takihara Y."/>
            <person name="Kim J.Y."/>
            <person name="Matsuda-Hashii Y."/>
            <person name="Tokimasa S."/>
            <person name="Fujisaki H."/>
            <person name="Kubota K."/>
            <person name="Endo H."/>
            <person name="Onodera T."/>
            <person name="Ohta H."/>
            <person name="Ozono K."/>
            <person name="Hara J."/>
        </authorList>
    </citation>
    <scope>NUCLEOTIDE SEQUENCE [MRNA]</scope>
    <scope>FUNCTION</scope>
    <scope>TISSUE SPECIFICITY</scope>
    <scope>CHROMOSOMAL TRANSLOCATION</scope>
    <scope>INVOLVEMENT IN AGM5</scope>
</reference>
<reference key="2">
    <citation type="journal article" date="2000" name="DNA Res.">
        <title>Prediction of the coding sequences of unidentified human genes. XVI. The complete sequences of 150 new cDNA clones from brain which code for large proteins in vitro.</title>
        <authorList>
            <person name="Nagase T."/>
            <person name="Kikuno R."/>
            <person name="Ishikawa K."/>
            <person name="Hirosawa M."/>
            <person name="Ohara O."/>
        </authorList>
    </citation>
    <scope>NUCLEOTIDE SEQUENCE [LARGE SCALE MRNA]</scope>
    <scope>TISSUE SPECIFICITY</scope>
    <source>
        <tissue>Brain</tissue>
    </source>
</reference>
<reference key="3">
    <citation type="journal article" date="2004" name="Nature">
        <title>DNA sequence and analysis of human chromosome 9.</title>
        <authorList>
            <person name="Humphray S.J."/>
            <person name="Oliver K."/>
            <person name="Hunt A.R."/>
            <person name="Plumb R.W."/>
            <person name="Loveland J.E."/>
            <person name="Howe K.L."/>
            <person name="Andrews T.D."/>
            <person name="Searle S."/>
            <person name="Hunt S.E."/>
            <person name="Scott C.E."/>
            <person name="Jones M.C."/>
            <person name="Ainscough R."/>
            <person name="Almeida J.P."/>
            <person name="Ambrose K.D."/>
            <person name="Ashwell R.I.S."/>
            <person name="Babbage A.K."/>
            <person name="Babbage S."/>
            <person name="Bagguley C.L."/>
            <person name="Bailey J."/>
            <person name="Banerjee R."/>
            <person name="Barker D.J."/>
            <person name="Barlow K.F."/>
            <person name="Bates K."/>
            <person name="Beasley H."/>
            <person name="Beasley O."/>
            <person name="Bird C.P."/>
            <person name="Bray-Allen S."/>
            <person name="Brown A.J."/>
            <person name="Brown J.Y."/>
            <person name="Burford D."/>
            <person name="Burrill W."/>
            <person name="Burton J."/>
            <person name="Carder C."/>
            <person name="Carter N.P."/>
            <person name="Chapman J.C."/>
            <person name="Chen Y."/>
            <person name="Clarke G."/>
            <person name="Clark S.Y."/>
            <person name="Clee C.M."/>
            <person name="Clegg S."/>
            <person name="Collier R.E."/>
            <person name="Corby N."/>
            <person name="Crosier M."/>
            <person name="Cummings A.T."/>
            <person name="Davies J."/>
            <person name="Dhami P."/>
            <person name="Dunn M."/>
            <person name="Dutta I."/>
            <person name="Dyer L.W."/>
            <person name="Earthrowl M.E."/>
            <person name="Faulkner L."/>
            <person name="Fleming C.J."/>
            <person name="Frankish A."/>
            <person name="Frankland J.A."/>
            <person name="French L."/>
            <person name="Fricker D.G."/>
            <person name="Garner P."/>
            <person name="Garnett J."/>
            <person name="Ghori J."/>
            <person name="Gilbert J.G.R."/>
            <person name="Glison C."/>
            <person name="Grafham D.V."/>
            <person name="Gribble S."/>
            <person name="Griffiths C."/>
            <person name="Griffiths-Jones S."/>
            <person name="Grocock R."/>
            <person name="Guy J."/>
            <person name="Hall R.E."/>
            <person name="Hammond S."/>
            <person name="Harley J.L."/>
            <person name="Harrison E.S.I."/>
            <person name="Hart E.A."/>
            <person name="Heath P.D."/>
            <person name="Henderson C.D."/>
            <person name="Hopkins B.L."/>
            <person name="Howard P.J."/>
            <person name="Howden P.J."/>
            <person name="Huckle E."/>
            <person name="Johnson C."/>
            <person name="Johnson D."/>
            <person name="Joy A.A."/>
            <person name="Kay M."/>
            <person name="Keenan S."/>
            <person name="Kershaw J.K."/>
            <person name="Kimberley A.M."/>
            <person name="King A."/>
            <person name="Knights A."/>
            <person name="Laird G.K."/>
            <person name="Langford C."/>
            <person name="Lawlor S."/>
            <person name="Leongamornlert D.A."/>
            <person name="Leversha M."/>
            <person name="Lloyd C."/>
            <person name="Lloyd D.M."/>
            <person name="Lovell J."/>
            <person name="Martin S."/>
            <person name="Mashreghi-Mohammadi M."/>
            <person name="Matthews L."/>
            <person name="McLaren S."/>
            <person name="McLay K.E."/>
            <person name="McMurray A."/>
            <person name="Milne S."/>
            <person name="Nickerson T."/>
            <person name="Nisbett J."/>
            <person name="Nordsiek G."/>
            <person name="Pearce A.V."/>
            <person name="Peck A.I."/>
            <person name="Porter K.M."/>
            <person name="Pandian R."/>
            <person name="Pelan S."/>
            <person name="Phillimore B."/>
            <person name="Povey S."/>
            <person name="Ramsey Y."/>
            <person name="Rand V."/>
            <person name="Scharfe M."/>
            <person name="Sehra H.K."/>
            <person name="Shownkeen R."/>
            <person name="Sims S.K."/>
            <person name="Skuce C.D."/>
            <person name="Smith M."/>
            <person name="Steward C.A."/>
            <person name="Swarbreck D."/>
            <person name="Sycamore N."/>
            <person name="Tester J."/>
            <person name="Thorpe A."/>
            <person name="Tracey A."/>
            <person name="Tromans A."/>
            <person name="Thomas D.W."/>
            <person name="Wall M."/>
            <person name="Wallis J.M."/>
            <person name="West A.P."/>
            <person name="Whitehead S.L."/>
            <person name="Willey D.L."/>
            <person name="Williams S.A."/>
            <person name="Wilming L."/>
            <person name="Wray P.W."/>
            <person name="Young L."/>
            <person name="Ashurst J.L."/>
            <person name="Coulson A."/>
            <person name="Blocker H."/>
            <person name="Durbin R.M."/>
            <person name="Sulston J.E."/>
            <person name="Hubbard T."/>
            <person name="Jackson M.J."/>
            <person name="Bentley D.R."/>
            <person name="Beck S."/>
            <person name="Rogers J."/>
            <person name="Dunham I."/>
        </authorList>
    </citation>
    <scope>NUCLEOTIDE SEQUENCE [LARGE SCALE GENOMIC DNA]</scope>
</reference>
<reference key="4">
    <citation type="journal article" date="2004" name="Genome Res.">
        <title>The status, quality, and expansion of the NIH full-length cDNA project: the Mammalian Gene Collection (MGC).</title>
        <authorList>
            <consortium name="The MGC Project Team"/>
        </authorList>
    </citation>
    <scope>NUCLEOTIDE SEQUENCE [LARGE SCALE MRNA]</scope>
    <source>
        <tissue>Pancreas</tissue>
    </source>
</reference>
<reference key="5">
    <citation type="submission" date="2009-10" db="UniProtKB">
        <authorList>
            <person name="Bienvenut W.V."/>
            <person name="Pchelintsev N."/>
            <person name="Adams P.D."/>
        </authorList>
    </citation>
    <scope>PROTEIN SEQUENCE OF 1-8; 483-492; 534-541 AND 735-749</scope>
    <scope>ACETYLATION AT MET-1</scope>
    <scope>IDENTIFICATION BY MASS SPECTROMETRY</scope>
    <source>
        <tissue>Lung fibroblast</tissue>
    </source>
</reference>
<reference key="6">
    <citation type="journal article" date="2003" name="Genome Res.">
        <title>The secreted protein discovery initiative (SPDI), a large-scale effort to identify novel human secreted and transmembrane proteins: a bioinformatics assessment.</title>
        <authorList>
            <person name="Clark H.F."/>
            <person name="Gurney A.L."/>
            <person name="Abaya E."/>
            <person name="Baker K."/>
            <person name="Baldwin D.T."/>
            <person name="Brush J."/>
            <person name="Chen J."/>
            <person name="Chow B."/>
            <person name="Chui C."/>
            <person name="Crowley C."/>
            <person name="Currell B."/>
            <person name="Deuel B."/>
            <person name="Dowd P."/>
            <person name="Eaton D."/>
            <person name="Foster J.S."/>
            <person name="Grimaldi C."/>
            <person name="Gu Q."/>
            <person name="Hass P.E."/>
            <person name="Heldens S."/>
            <person name="Huang A."/>
            <person name="Kim H.S."/>
            <person name="Klimowski L."/>
            <person name="Jin Y."/>
            <person name="Johnson S."/>
            <person name="Lee J."/>
            <person name="Lewis L."/>
            <person name="Liao D."/>
            <person name="Mark M.R."/>
            <person name="Robbie E."/>
            <person name="Sanchez C."/>
            <person name="Schoenfeld J."/>
            <person name="Seshagiri S."/>
            <person name="Simmons L."/>
            <person name="Singh J."/>
            <person name="Smith V."/>
            <person name="Stinson J."/>
            <person name="Vagts A."/>
            <person name="Vandlen R.L."/>
            <person name="Watanabe C."/>
            <person name="Wieand D."/>
            <person name="Woods K."/>
            <person name="Xie M.-H."/>
            <person name="Yansura D.G."/>
            <person name="Yi S."/>
            <person name="Yu G."/>
            <person name="Yuan J."/>
            <person name="Zhang M."/>
            <person name="Zhang Z."/>
            <person name="Goddard A.D."/>
            <person name="Wood W.I."/>
            <person name="Godowski P.J."/>
            <person name="Gray A.M."/>
        </authorList>
    </citation>
    <scope>NUCLEOTIDE SEQUENCE [LARGE SCALE MRNA] OF 239-810</scope>
</reference>
<reference key="7">
    <citation type="journal article" date="2004" name="Nat. Genet.">
        <title>Complete sequencing and characterization of 21,243 full-length human cDNAs.</title>
        <authorList>
            <person name="Ota T."/>
            <person name="Suzuki Y."/>
            <person name="Nishikawa T."/>
            <person name="Otsuki T."/>
            <person name="Sugiyama T."/>
            <person name="Irie R."/>
            <person name="Wakamatsu A."/>
            <person name="Hayashi K."/>
            <person name="Sato H."/>
            <person name="Nagai K."/>
            <person name="Kimura K."/>
            <person name="Makita H."/>
            <person name="Sekine M."/>
            <person name="Obayashi M."/>
            <person name="Nishi T."/>
            <person name="Shibahara T."/>
            <person name="Tanaka T."/>
            <person name="Ishii S."/>
            <person name="Yamamoto J."/>
            <person name="Saito K."/>
            <person name="Kawai Y."/>
            <person name="Isono Y."/>
            <person name="Nakamura Y."/>
            <person name="Nagahari K."/>
            <person name="Murakami K."/>
            <person name="Yasuda T."/>
            <person name="Iwayanagi T."/>
            <person name="Wagatsuma M."/>
            <person name="Shiratori A."/>
            <person name="Sudo H."/>
            <person name="Hosoiri T."/>
            <person name="Kaku Y."/>
            <person name="Kodaira H."/>
            <person name="Kondo H."/>
            <person name="Sugawara M."/>
            <person name="Takahashi M."/>
            <person name="Kanda K."/>
            <person name="Yokoi T."/>
            <person name="Furuya T."/>
            <person name="Kikkawa E."/>
            <person name="Omura Y."/>
            <person name="Abe K."/>
            <person name="Kamihara K."/>
            <person name="Katsuta N."/>
            <person name="Sato K."/>
            <person name="Tanikawa M."/>
            <person name="Yamazaki M."/>
            <person name="Ninomiya K."/>
            <person name="Ishibashi T."/>
            <person name="Yamashita H."/>
            <person name="Murakawa K."/>
            <person name="Fujimori K."/>
            <person name="Tanai H."/>
            <person name="Kimata M."/>
            <person name="Watanabe M."/>
            <person name="Hiraoka S."/>
            <person name="Chiba Y."/>
            <person name="Ishida S."/>
            <person name="Ono Y."/>
            <person name="Takiguchi S."/>
            <person name="Watanabe S."/>
            <person name="Yosida M."/>
            <person name="Hotuta T."/>
            <person name="Kusano J."/>
            <person name="Kanehori K."/>
            <person name="Takahashi-Fujii A."/>
            <person name="Hara H."/>
            <person name="Tanase T.-O."/>
            <person name="Nomura Y."/>
            <person name="Togiya S."/>
            <person name="Komai F."/>
            <person name="Hara R."/>
            <person name="Takeuchi K."/>
            <person name="Arita M."/>
            <person name="Imose N."/>
            <person name="Musashino K."/>
            <person name="Yuuki H."/>
            <person name="Oshima A."/>
            <person name="Sasaki N."/>
            <person name="Aotsuka S."/>
            <person name="Yoshikawa Y."/>
            <person name="Matsunawa H."/>
            <person name="Ichihara T."/>
            <person name="Shiohata N."/>
            <person name="Sano S."/>
            <person name="Moriya S."/>
            <person name="Momiyama H."/>
            <person name="Satoh N."/>
            <person name="Takami S."/>
            <person name="Terashima Y."/>
            <person name="Suzuki O."/>
            <person name="Nakagawa S."/>
            <person name="Senoh A."/>
            <person name="Mizoguchi H."/>
            <person name="Goto Y."/>
            <person name="Shimizu F."/>
            <person name="Wakebe H."/>
            <person name="Hishigaki H."/>
            <person name="Watanabe T."/>
            <person name="Sugiyama A."/>
            <person name="Takemoto M."/>
            <person name="Kawakami B."/>
            <person name="Yamazaki M."/>
            <person name="Watanabe K."/>
            <person name="Kumagai A."/>
            <person name="Itakura S."/>
            <person name="Fukuzumi Y."/>
            <person name="Fujimori Y."/>
            <person name="Komiyama M."/>
            <person name="Tashiro H."/>
            <person name="Tanigami A."/>
            <person name="Fujiwara T."/>
            <person name="Ono T."/>
            <person name="Yamada K."/>
            <person name="Fujii Y."/>
            <person name="Ozaki K."/>
            <person name="Hirao M."/>
            <person name="Ohmori Y."/>
            <person name="Kawabata A."/>
            <person name="Hikiji T."/>
            <person name="Kobatake N."/>
            <person name="Inagaki H."/>
            <person name="Ikema Y."/>
            <person name="Okamoto S."/>
            <person name="Okitani R."/>
            <person name="Kawakami T."/>
            <person name="Noguchi S."/>
            <person name="Itoh T."/>
            <person name="Shigeta K."/>
            <person name="Senba T."/>
            <person name="Matsumura K."/>
            <person name="Nakajima Y."/>
            <person name="Mizuno T."/>
            <person name="Morinaga M."/>
            <person name="Sasaki M."/>
            <person name="Togashi T."/>
            <person name="Oyama M."/>
            <person name="Hata H."/>
            <person name="Watanabe M."/>
            <person name="Komatsu T."/>
            <person name="Mizushima-Sugano J."/>
            <person name="Satoh T."/>
            <person name="Shirai Y."/>
            <person name="Takahashi Y."/>
            <person name="Nakagawa K."/>
            <person name="Okumura K."/>
            <person name="Nagase T."/>
            <person name="Nomura N."/>
            <person name="Kikuchi H."/>
            <person name="Masuho Y."/>
            <person name="Yamashita R."/>
            <person name="Nakai K."/>
            <person name="Yada T."/>
            <person name="Nakamura Y."/>
            <person name="Ohara O."/>
            <person name="Isogai T."/>
            <person name="Sugano S."/>
        </authorList>
    </citation>
    <scope>NUCLEOTIDE SEQUENCE [LARGE SCALE MRNA] OF 259-810</scope>
</reference>
<reference key="8">
    <citation type="journal article" date="2004" name="Mol. Immunol.">
        <title>LRRC8 extracellular domain is composed of 17 leucine-rich repeats.</title>
        <authorList>
            <person name="Smits G."/>
            <person name="Kajava A.V."/>
        </authorList>
    </citation>
    <scope>DOMAINS LEUCINE-RICH REPEATS</scope>
</reference>
<reference key="9">
    <citation type="journal article" date="2012" name="Bioessays">
        <title>LRRC8 proteins share a common ancestor with pannexins, and may form hexameric channels involved in cell-cell communication.</title>
        <authorList>
            <person name="Abascal F."/>
            <person name="Zardoya R."/>
        </authorList>
    </citation>
    <scope>IDENTIFICATION</scope>
</reference>
<reference key="10">
    <citation type="journal article" date="2006" name="Cell">
        <title>Global, in vivo, and site-specific phosphorylation dynamics in signaling networks.</title>
        <authorList>
            <person name="Olsen J.V."/>
            <person name="Blagoev B."/>
            <person name="Gnad F."/>
            <person name="Macek B."/>
            <person name="Kumar C."/>
            <person name="Mortensen P."/>
            <person name="Mann M."/>
        </authorList>
    </citation>
    <scope>PHOSPHORYLATION [LARGE SCALE ANALYSIS] AT SER-217</scope>
    <scope>IDENTIFICATION BY MASS SPECTROMETRY [LARGE SCALE ANALYSIS]</scope>
    <source>
        <tissue>Cervix carcinoma</tissue>
    </source>
</reference>
<reference key="11">
    <citation type="journal article" date="2011" name="Sci. Signal.">
        <title>System-wide temporal characterization of the proteome and phosphoproteome of human embryonic stem cell differentiation.</title>
        <authorList>
            <person name="Rigbolt K.T."/>
            <person name="Prokhorova T.A."/>
            <person name="Akimov V."/>
            <person name="Henningsen J."/>
            <person name="Johansen P.T."/>
            <person name="Kratchmarova I."/>
            <person name="Kassem M."/>
            <person name="Mann M."/>
            <person name="Olsen J.V."/>
            <person name="Blagoev B."/>
        </authorList>
    </citation>
    <scope>PHOSPHORYLATION [LARGE SCALE ANALYSIS] AT SER-217</scope>
    <scope>IDENTIFICATION BY MASS SPECTROMETRY [LARGE SCALE ANALYSIS]</scope>
</reference>
<reference key="12">
    <citation type="journal article" date="2012" name="Proc. Natl. Acad. Sci. U.S.A.">
        <title>N-terminal acetylome analyses and functional insights of the N-terminal acetyltransferase NatB.</title>
        <authorList>
            <person name="Van Damme P."/>
            <person name="Lasa M."/>
            <person name="Polevoda B."/>
            <person name="Gazquez C."/>
            <person name="Elosegui-Artola A."/>
            <person name="Kim D.S."/>
            <person name="De Juan-Pardo E."/>
            <person name="Demeyer K."/>
            <person name="Hole K."/>
            <person name="Larrea E."/>
            <person name="Timmerman E."/>
            <person name="Prieto J."/>
            <person name="Arnesen T."/>
            <person name="Sherman F."/>
            <person name="Gevaert K."/>
            <person name="Aldabe R."/>
        </authorList>
    </citation>
    <scope>ACETYLATION [LARGE SCALE ANALYSIS] AT MET-1</scope>
    <scope>IDENTIFICATION BY MASS SPECTROMETRY [LARGE SCALE ANALYSIS]</scope>
</reference>
<reference key="13">
    <citation type="journal article" date="2013" name="J. Proteome Res.">
        <title>Toward a comprehensive characterization of a human cancer cell phosphoproteome.</title>
        <authorList>
            <person name="Zhou H."/>
            <person name="Di Palma S."/>
            <person name="Preisinger C."/>
            <person name="Peng M."/>
            <person name="Polat A.N."/>
            <person name="Heck A.J."/>
            <person name="Mohammed S."/>
        </authorList>
    </citation>
    <scope>PHOSPHORYLATION [LARGE SCALE ANALYSIS] AT THR-215 AND SER-217</scope>
    <scope>IDENTIFICATION BY MASS SPECTROMETRY [LARGE SCALE ANALYSIS]</scope>
    <source>
        <tissue>Cervix carcinoma</tissue>
        <tissue>Erythroleukemia</tissue>
    </source>
</reference>
<reference key="14">
    <citation type="journal article" date="2014" name="Cell">
        <title>SWELL1, a plasma membrane protein, is an essential component of volume-regulated anion channel.</title>
        <authorList>
            <person name="Qiu Z."/>
            <person name="Dubin A.E."/>
            <person name="Mathur J."/>
            <person name="Tu B."/>
            <person name="Reddy K."/>
            <person name="Miraglia L.J."/>
            <person name="Reinhardt J."/>
            <person name="Orth A.P."/>
            <person name="Patapoutian A."/>
        </authorList>
    </citation>
    <scope>FUNCTION</scope>
    <scope>TRANSPORTER ACTIVITY</scope>
    <scope>SUBCELLULAR LOCATION</scope>
    <scope>MUTAGENESIS OF THR-44</scope>
</reference>
<reference key="15">
    <citation type="journal article" date="2014" name="J. Biol. Chem.">
        <title>The protein synthesis inhibitor blasticidin S enters mammalian cells via leucine-rich repeat-containing protein 8D.</title>
        <authorList>
            <person name="Lee C.C."/>
            <person name="Freinkman E."/>
            <person name="Sabatini D.M."/>
            <person name="Ploegh H.L."/>
        </authorList>
    </citation>
    <scope>SUBCELLULAR LOCATION</scope>
    <scope>TOPOLOGY</scope>
    <scope>INTERACTION WITH LRRC8D</scope>
    <scope>SUBUNIT</scope>
</reference>
<reference key="16">
    <citation type="journal article" date="2014" name="Science">
        <title>Identification of LRRC8 heteromers as an essential component of the volume-regulated anion channel VRAC.</title>
        <authorList>
            <person name="Voss F.K."/>
            <person name="Ullrich F."/>
            <person name="Muench J."/>
            <person name="Lazarow K."/>
            <person name="Lutter D."/>
            <person name="Mah N."/>
            <person name="Andrade-Navarro M.A."/>
            <person name="von Kries J.P."/>
            <person name="Stauber T."/>
            <person name="Jentsch T.J."/>
        </authorList>
    </citation>
    <scope>FUNCTION</scope>
    <scope>TRANSPORTER ACTIVITY</scope>
    <scope>SUBCELLULAR LOCATION</scope>
    <scope>SUBUNIT</scope>
    <scope>INTERACTION WITH LRRC8B; LRRC8C; LRRC8D AND LRRC8E</scope>
    <scope>TOPOLOGY</scope>
    <scope>GLYCOSYLATION</scope>
    <scope>MUTAGENESIS OF ASN-66 AND ASN-83</scope>
</reference>
<reference key="17">
    <citation type="journal article" date="2015" name="EMBO J.">
        <title>Subunit composition of VRAC channels determines substrate specificity and cellular resistance to Pt-based anti-cancer drugs.</title>
        <authorList>
            <person name="Planells-Cases R."/>
            <person name="Lutter D."/>
            <person name="Guyader C."/>
            <person name="Gerhards N.M."/>
            <person name="Ullrich F."/>
            <person name="Elger D.A."/>
            <person name="Kucukosmanoglu A."/>
            <person name="Xu G."/>
            <person name="Voss F.K."/>
            <person name="Reincke S.M."/>
            <person name="Stauber T."/>
            <person name="Blomen V.A."/>
            <person name="Vis D.J."/>
            <person name="Wessels L.F."/>
            <person name="Brummelkamp T.R."/>
            <person name="Borst P."/>
            <person name="Rottenberg S."/>
            <person name="Jentsch T.J."/>
        </authorList>
    </citation>
    <scope>FUNCTION</scope>
</reference>
<reference key="18">
    <citation type="journal article" date="2016" name="Cell">
        <title>LRRC8 proteins form volume-regulated anion channels that sense ionic strength.</title>
        <authorList>
            <person name="Syeda R."/>
            <person name="Qiu Z."/>
            <person name="Dubin A.E."/>
            <person name="Murthy S.E."/>
            <person name="Florendo M.N."/>
            <person name="Mason D.E."/>
            <person name="Mathur J."/>
            <person name="Cahalan S.M."/>
            <person name="Peters E.C."/>
            <person name="Montal M."/>
            <person name="Patapoutian A."/>
        </authorList>
    </citation>
    <scope>FUNCTION</scope>
    <scope>SUBCELLULAR LOCATION</scope>
    <scope>SUBUNIT</scope>
</reference>
<reference key="19">
    <citation type="journal article" date="2017" name="J. Cell Sci.">
        <title>Selective transport of neurotransmitters and modulators by distinct volume-regulated LRRC8 anion channels.</title>
        <authorList>
            <person name="Lutter D."/>
            <person name="Ullrich F."/>
            <person name="Lueck J.C."/>
            <person name="Kempa S."/>
            <person name="Jentsch T.J."/>
        </authorList>
    </citation>
    <scope>FUNCTION</scope>
    <scope>TRANSPORTER ACTIVITY</scope>
    <scope>SUBUNIT</scope>
    <scope>SUBCELLULAR LOCATION</scope>
</reference>
<reference key="20">
    <citation type="journal article" date="2018" name="J. Biol. Chem.">
        <title>LRRC8 N termini influence pore properties and gating of volume-regulated anion channels (VRACs).</title>
        <authorList>
            <person name="Zhou P."/>
            <person name="Polovitskaya M.M."/>
            <person name="Jentsch T.J."/>
        </authorList>
    </citation>
    <scope>DOMAIN</scope>
    <scope>MUTAGENESIS OF GLU-6</scope>
</reference>
<reference key="21">
    <citation type="journal article" date="2018" name="Nature">
        <title>Structure of a volume-regulated anion channel of the LRRC8 family.</title>
        <authorList>
            <person name="Deneka D."/>
            <person name="Sawicka M."/>
            <person name="Lam A.K.M."/>
            <person name="Paulino C."/>
            <person name="Dutzler R."/>
        </authorList>
    </citation>
    <scope>FUNCTION</scope>
    <scope>SUBCELLULAR LOCATION</scope>
</reference>
<reference key="22">
    <citation type="journal article" date="2018" name="Nat. Commun.">
        <title>SWELL1 is a glucose sensor regulating beta-cell excitability and systemic glycaemia.</title>
        <authorList>
            <person name="Kang C."/>
            <person name="Xie L."/>
            <person name="Gunasekar S.K."/>
            <person name="Mishra A."/>
            <person name="Zhang Y."/>
            <person name="Pai S."/>
            <person name="Gao Y."/>
            <person name="Kumar A."/>
            <person name="Norris A.W."/>
            <person name="Stephens S.B."/>
            <person name="Sah R."/>
        </authorList>
    </citation>
    <scope>FUNCTION</scope>
</reference>
<reference key="23">
    <citation type="journal article" date="2019" name="Sci. Rep.">
        <title>CRISPR knockout screen implicates three genes in lysosome function.</title>
        <authorList>
            <person name="Lenk G.M."/>
            <person name="Park Y.N."/>
            <person name="Lemons R."/>
            <person name="Flynn E."/>
            <person name="Plank M."/>
            <person name="Frei C.M."/>
            <person name="Davis M.J."/>
            <person name="Gregorka B."/>
            <person name="Swanson J.A."/>
            <person name="Meisler M.H."/>
            <person name="Kitzman J.O."/>
        </authorList>
    </citation>
    <scope>FUNCTION</scope>
</reference>
<reference key="24">
    <citation type="journal article" date="2020" name="Mol. Cell">
        <title>LRRC8A:C/E heteromeric channels are ubiquitous transporters of cGAMP.</title>
        <authorList>
            <person name="Lahey L.J."/>
            <person name="Mardjuki R.E."/>
            <person name="Wen X."/>
            <person name="Hess G.T."/>
            <person name="Ritchie C."/>
            <person name="Carozza J.A."/>
            <person name="Boehnert V."/>
            <person name="Maduke M."/>
            <person name="Bassik M.C."/>
            <person name="Li L."/>
        </authorList>
    </citation>
    <scope>FUNCTION</scope>
    <scope>TRANSPORTER ACTIVITY</scope>
    <scope>MUTAGENESIS OF ARG-103</scope>
</reference>
<reference key="25">
    <citation type="journal article" date="2020" name="Proc. Natl. Acad. Sci. U.S.A.">
        <title>LRRC8 family proteins within lysosomes regulate cellular osmoregulation and enhance cell survival to multiple physiological stresses.</title>
        <authorList>
            <person name="Li P."/>
            <person name="Hu M."/>
            <person name="Wang C."/>
            <person name="Feng X."/>
            <person name="Zhao Z."/>
            <person name="Yang Y."/>
            <person name="Sahoo N."/>
            <person name="Gu M."/>
            <person name="Yang Y."/>
            <person name="Xiao S."/>
            <person name="Sah R."/>
            <person name="Cover T.L."/>
            <person name="Chou J."/>
            <person name="Geha R."/>
            <person name="Benavides F."/>
            <person name="Hume R.I."/>
            <person name="Xu H."/>
        </authorList>
    </citation>
    <scope>FUNCTION</scope>
    <scope>SUBCELLULAR LOCATION</scope>
    <scope>DOMAIN</scope>
    <scope>MUTAGENESIS OF 706-LEU-LEU-707</scope>
</reference>
<reference key="26">
    <citation type="journal article" date="2025" name="Inflammation">
        <title>NOX4 Regulates NLRP3 by Inhibiting the Ubiquitination of LRRC8A to Promote Ferroptosis in Nucleus Pulposus Cells.</title>
        <authorList>
            <person name="Zhang F."/>
            <person name="Cui D."/>
            <person name="Wang Z."/>
            <person name="Li Y."/>
            <person name="Wang K."/>
            <person name="Lu H."/>
            <person name="Yu H."/>
            <person name="Jiao W."/>
            <person name="Cui X."/>
        </authorList>
    </citation>
    <scope>FUNCTION</scope>
    <scope>INTERACTION WITH NOX4</scope>
</reference>
<reference evidence="38" key="27">
    <citation type="journal article" date="2018" name="Elife">
        <title>Structure of the human volume regulated anion channel.</title>
        <authorList>
            <person name="Kefauver J.M."/>
            <person name="Saotome K."/>
            <person name="Dubin A.E."/>
            <person name="Pallesen J."/>
            <person name="Cottrell C.A."/>
            <person name="Cahalan S.M."/>
            <person name="Qiu Z."/>
            <person name="Hong G."/>
            <person name="Crowley C.S."/>
            <person name="Whitwam T."/>
            <person name="Lee W.H."/>
            <person name="Ward A.B."/>
            <person name="Patapoutian A."/>
        </authorList>
    </citation>
    <scope>STRUCTURE BY ELECTRON MICROSCOPY (4.40 ANGSTROMS)</scope>
    <scope>FUNCTION</scope>
    <scope>DISULFIDE BONDS</scope>
    <scope>DOMAIN</scope>
    <scope>MUTAGENESIS OF THR-5 AND ARG-103</scope>
</reference>
<reference evidence="37" key="28">
    <citation type="journal article" date="2018" name="Nat. Struct. Mol. Biol.">
        <title>Cryo-EM structures of the human volume-regulated anion channel LRRC8.</title>
        <authorList>
            <person name="Kasuya G."/>
            <person name="Nakane T."/>
            <person name="Yokoyama T."/>
            <person name="Jia Y."/>
            <person name="Inoue M."/>
            <person name="Watanabe K."/>
            <person name="Nakamura R."/>
            <person name="Nishizawa T."/>
            <person name="Kusakizako T."/>
            <person name="Tsutsumi A."/>
            <person name="Yanagisawa H."/>
            <person name="Dohmae N."/>
            <person name="Hattori M."/>
            <person name="Ichijo H."/>
            <person name="Yan Z."/>
            <person name="Kikkawa M."/>
            <person name="Shirouzu M."/>
            <person name="Ishitani R."/>
            <person name="Nureki O."/>
        </authorList>
    </citation>
    <scope>STRUCTURE BY ELECTRON MICROSCOPY (4.25 ANGSTROMS)</scope>
    <scope>DISULFIDE BONDS</scope>
    <scope>DOMAIN</scope>
</reference>
<reference evidence="39 40 41 42 43" key="29">
    <citation type="journal article" date="2023" name="Elife">
        <title>Cryo-EM structures of an LRRC8 chimera with native functional properties reveal heptameric assembly.</title>
        <authorList>
            <person name="Takahashi H."/>
            <person name="Yamada T."/>
            <person name="Denton J.S."/>
            <person name="Strange K."/>
            <person name="Karakas E."/>
        </authorList>
    </citation>
    <scope>STRUCTURE BY ELECTRON MICROSCOPY (3.40 ANGSTROMS) OF 182-206 IN COMPLEX WITH LRRC8C</scope>
</reference>
<reference key="30">
    <citation type="journal article" date="2018" name="JCI Insight">
        <title>Deficient LRRC8A-dependent volume-regulated anion channel activity is associated with male infertility in mice.</title>
        <authorList>
            <person name="Bao J."/>
            <person name="Perez C.J."/>
            <person name="Kim J."/>
            <person name="Zhang H."/>
            <person name="Murphy C.J."/>
            <person name="Hamidi T."/>
            <person name="Jaubert J."/>
            <person name="Platt C.D."/>
            <person name="Chou J."/>
            <person name="Deng M."/>
            <person name="Zhou M.H."/>
            <person name="Huang Y."/>
            <person name="Gaitan-Penas H."/>
            <person name="Guenet J.L."/>
            <person name="Lin K."/>
            <person name="Lu Y."/>
            <person name="Chen T."/>
            <person name="Bedford M.T."/>
            <person name="Dent S.Y."/>
            <person name="Richburg J.H."/>
            <person name="Estevez R."/>
            <person name="Pan H.L."/>
            <person name="Geha R.S."/>
            <person name="Shi Q."/>
            <person name="Benavides F."/>
        </authorList>
    </citation>
    <scope>VARIANT HIS-545</scope>
</reference>
<proteinExistence type="evidence at protein level"/>
<protein>
    <recommendedName>
        <fullName evidence="29">Volume-regulated anion channel subunit LRRC8A</fullName>
    </recommendedName>
    <alternativeName>
        <fullName evidence="26">Leucine-rich repeat-containing protein 8A</fullName>
        <shortName evidence="28">HsLRRC8A</shortName>
    </alternativeName>
    <alternativeName>
        <fullName evidence="27">Swelling protein 1</fullName>
    </alternativeName>
</protein>
<organism>
    <name type="scientific">Homo sapiens</name>
    <name type="common">Human</name>
    <dbReference type="NCBI Taxonomy" id="9606"/>
    <lineage>
        <taxon>Eukaryota</taxon>
        <taxon>Metazoa</taxon>
        <taxon>Chordata</taxon>
        <taxon>Craniata</taxon>
        <taxon>Vertebrata</taxon>
        <taxon>Euteleostomi</taxon>
        <taxon>Mammalia</taxon>
        <taxon>Eutheria</taxon>
        <taxon>Euarchontoglires</taxon>
        <taxon>Primates</taxon>
        <taxon>Haplorrhini</taxon>
        <taxon>Catarrhini</taxon>
        <taxon>Hominidae</taxon>
        <taxon>Homo</taxon>
    </lineage>
</organism>
<keyword id="KW-0002">3D-structure</keyword>
<keyword id="KW-0007">Acetylation</keyword>
<keyword id="KW-1003">Cell membrane</keyword>
<keyword id="KW-0160">Chromosomal rearrangement</keyword>
<keyword id="KW-0221">Differentiation</keyword>
<keyword id="KW-0903">Direct protein sequencing</keyword>
<keyword id="KW-1015">Disulfide bond</keyword>
<keyword id="KW-0325">Glycoprotein</keyword>
<keyword id="KW-0407">Ion channel</keyword>
<keyword id="KW-0406">Ion transport</keyword>
<keyword id="KW-0433">Leucine-rich repeat</keyword>
<keyword id="KW-0458">Lysosome</keyword>
<keyword id="KW-0472">Membrane</keyword>
<keyword id="KW-0597">Phosphoprotein</keyword>
<keyword id="KW-1267">Proteomics identification</keyword>
<keyword id="KW-1185">Reference proteome</keyword>
<keyword id="KW-0677">Repeat</keyword>
<keyword id="KW-0744">Spermatogenesis</keyword>
<keyword id="KW-0812">Transmembrane</keyword>
<keyword id="KW-1133">Transmembrane helix</keyword>
<keyword id="KW-0813">Transport</keyword>
<evidence type="ECO:0000250" key="1">
    <source>
        <dbReference type="UniProtKB" id="Q4V8I7"/>
    </source>
</evidence>
<evidence type="ECO:0000250" key="2">
    <source>
        <dbReference type="UniProtKB" id="Q80WG5"/>
    </source>
</evidence>
<evidence type="ECO:0000255" key="3"/>
<evidence type="ECO:0000269" key="4">
    <source>
    </source>
</evidence>
<evidence type="ECO:0000269" key="5">
    <source>
    </source>
</evidence>
<evidence type="ECO:0000269" key="6">
    <source>
    </source>
</evidence>
<evidence type="ECO:0000269" key="7">
    <source>
    </source>
</evidence>
<evidence type="ECO:0000269" key="8">
    <source>
    </source>
</evidence>
<evidence type="ECO:0000269" key="9">
    <source>
    </source>
</evidence>
<evidence type="ECO:0000269" key="10">
    <source>
    </source>
</evidence>
<evidence type="ECO:0000269" key="11">
    <source>
    </source>
</evidence>
<evidence type="ECO:0000269" key="12">
    <source>
    </source>
</evidence>
<evidence type="ECO:0000269" key="13">
    <source>
    </source>
</evidence>
<evidence type="ECO:0000269" key="14">
    <source>
    </source>
</evidence>
<evidence type="ECO:0000269" key="15">
    <source>
    </source>
</evidence>
<evidence type="ECO:0000269" key="16">
    <source>
    </source>
</evidence>
<evidence type="ECO:0000269" key="17">
    <source>
    </source>
</evidence>
<evidence type="ECO:0000269" key="18">
    <source>
    </source>
</evidence>
<evidence type="ECO:0000269" key="19">
    <source>
    </source>
</evidence>
<evidence type="ECO:0000269" key="20">
    <source>
    </source>
</evidence>
<evidence type="ECO:0000269" key="21">
    <source>
    </source>
</evidence>
<evidence type="ECO:0000269" key="22">
    <source ref="5"/>
</evidence>
<evidence type="ECO:0000303" key="23">
    <source>
    </source>
</evidence>
<evidence type="ECO:0000303" key="24">
    <source>
    </source>
</evidence>
<evidence type="ECO:0000303" key="25">
    <source>
    </source>
</evidence>
<evidence type="ECO:0000303" key="26">
    <source>
    </source>
</evidence>
<evidence type="ECO:0000303" key="27">
    <source>
    </source>
</evidence>
<evidence type="ECO:0000303" key="28">
    <source>
    </source>
</evidence>
<evidence type="ECO:0000303" key="29">
    <source>
    </source>
</evidence>
<evidence type="ECO:0000305" key="30"/>
<evidence type="ECO:0000305" key="31">
    <source>
    </source>
</evidence>
<evidence type="ECO:0000305" key="32">
    <source>
    </source>
</evidence>
<evidence type="ECO:0000305" key="33">
    <source>
    </source>
</evidence>
<evidence type="ECO:0000305" key="34">
    <source>
    </source>
</evidence>
<evidence type="ECO:0000305" key="35">
    <source>
    </source>
</evidence>
<evidence type="ECO:0000312" key="36">
    <source>
        <dbReference type="HGNC" id="HGNC:19027"/>
    </source>
</evidence>
<evidence type="ECO:0007744" key="37">
    <source>
        <dbReference type="PDB" id="5ZSU"/>
    </source>
</evidence>
<evidence type="ECO:0007744" key="38">
    <source>
        <dbReference type="PDB" id="6DJB"/>
    </source>
</evidence>
<evidence type="ECO:0007744" key="39">
    <source>
        <dbReference type="PDB" id="8DXN"/>
    </source>
</evidence>
<evidence type="ECO:0007744" key="40">
    <source>
        <dbReference type="PDB" id="8DXO"/>
    </source>
</evidence>
<evidence type="ECO:0007744" key="41">
    <source>
        <dbReference type="PDB" id="8DXP"/>
    </source>
</evidence>
<evidence type="ECO:0007744" key="42">
    <source>
        <dbReference type="PDB" id="8DXQ"/>
    </source>
</evidence>
<evidence type="ECO:0007744" key="43">
    <source>
        <dbReference type="PDB" id="8DXR"/>
    </source>
</evidence>
<evidence type="ECO:0007744" key="44">
    <source>
    </source>
</evidence>
<evidence type="ECO:0007744" key="45">
    <source>
    </source>
</evidence>
<evidence type="ECO:0007744" key="46">
    <source>
    </source>
</evidence>
<evidence type="ECO:0007744" key="47">
    <source>
    </source>
</evidence>
<evidence type="ECO:0007829" key="48">
    <source>
        <dbReference type="PDB" id="7XZH"/>
    </source>
</evidence>
<sequence length="810" mass="94199">MIPVTELRYFADTQPAYRILKPWWDVFTDYISIVMLMIAVFGGTLQVTQDKMICLPCKWVTKDSCNDSFRGWAAPGPEPTYPNSTILPTPDTGPTGIKYDLDRHQYNYVDAVCYENRLHWFAKYFPYLVLLHTLIFLACSNFWFKFPRTSSKLEHFVSILLKCFDSPWTTRALSETVVEESDPKPAFSKMNGSMDKKSSTVSEDVEATVPMLQRTKSRIEQGIVDRSETGVLDKKEGEQAKALFEKVKKFRTHVEEGDIVYRLYMRQTIIKVIKFILIICYTVYYVHNIKFDVDCTVDIESLTGYRTYRCAHPLATLFKILASFYISLVIFYGLICMYTLWWMLRRSLKKYSFESIREESSYSDIPDVKNDFAFMLHLIDQYDPLYSKRFAVFLSEVSENKLRQLNLNNEWTLDKLRQRLTKNAQDKLELHLFMLSGIPDTVFDLVELEVLKLELIPDVTIPPSIAQLTGLKELWLYHTAAKIEAPALAFLRENLRALHIKFTDIKEIPLWIYSLKTLEELHLTGNLSAENNRYIVIDGLRELKRLKVLRLKSNLSKLPQVVTDVGVHLQKLSINNEGTKLIVLNSLKKMANLTELELIRCDLERIPHSIFSLHNLQEIDLKDNNLKTIEEIISFQHLHRLTCLKLWYNHIAYIPIQIGNLTNLERLYLNRNKIEKIPTQLFYCRKLRYLDLSHNNLTFLPADIGLLQNLQNLAITANRIETLPPELFQCRKLRALHLGNNVLQSLPSRVGELTNLTQIELRGNRLECLPVELGECPLLKRSGLVVEEDLFNTLPPEVKERLWRADKEQA</sequence>
<dbReference type="EMBL" id="AY143166">
    <property type="protein sequence ID" value="AAN18279.1"/>
    <property type="molecule type" value="mRNA"/>
</dbReference>
<dbReference type="EMBL" id="AB037858">
    <property type="protein sequence ID" value="BAA92675.1"/>
    <property type="status" value="ALT_INIT"/>
    <property type="molecule type" value="mRNA"/>
</dbReference>
<dbReference type="EMBL" id="AL672142">
    <property type="status" value="NOT_ANNOTATED_CDS"/>
    <property type="molecule type" value="Genomic_DNA"/>
</dbReference>
<dbReference type="EMBL" id="BC051322">
    <property type="protein sequence ID" value="AAH51322.1"/>
    <property type="molecule type" value="mRNA"/>
</dbReference>
<dbReference type="EMBL" id="AY358286">
    <property type="protein sequence ID" value="AAQ88653.1"/>
    <property type="status" value="ALT_INIT"/>
    <property type="molecule type" value="mRNA"/>
</dbReference>
<dbReference type="EMBL" id="AK074723">
    <property type="protein sequence ID" value="BAC11161.1"/>
    <property type="status" value="ALT_INIT"/>
    <property type="molecule type" value="mRNA"/>
</dbReference>
<dbReference type="CCDS" id="CCDS35155.1"/>
<dbReference type="RefSeq" id="NP_001120716.1">
    <property type="nucleotide sequence ID" value="NM_001127244.2"/>
</dbReference>
<dbReference type="RefSeq" id="NP_001120717.1">
    <property type="nucleotide sequence ID" value="NM_001127245.2"/>
</dbReference>
<dbReference type="RefSeq" id="NP_062540.2">
    <property type="nucleotide sequence ID" value="NM_019594.4"/>
</dbReference>
<dbReference type="RefSeq" id="XP_005252152.1">
    <property type="nucleotide sequence ID" value="XM_005252095.3"/>
</dbReference>
<dbReference type="RefSeq" id="XP_005252153.1">
    <property type="nucleotide sequence ID" value="XM_005252096.5"/>
</dbReference>
<dbReference type="RefSeq" id="XP_006717249.1">
    <property type="nucleotide sequence ID" value="XM_006717186.3"/>
</dbReference>
<dbReference type="RefSeq" id="XP_011517165.1">
    <property type="nucleotide sequence ID" value="XM_011518863.2"/>
</dbReference>
<dbReference type="RefSeq" id="XP_011517166.1">
    <property type="nucleotide sequence ID" value="XM_011518864.3"/>
</dbReference>
<dbReference type="RefSeq" id="XP_011517167.1">
    <property type="nucleotide sequence ID" value="XM_011518865.2"/>
</dbReference>
<dbReference type="RefSeq" id="XP_047279551.1">
    <property type="nucleotide sequence ID" value="XM_047423595.1"/>
</dbReference>
<dbReference type="RefSeq" id="XP_047279552.1">
    <property type="nucleotide sequence ID" value="XM_047423596.1"/>
</dbReference>
<dbReference type="RefSeq" id="XP_047279553.1">
    <property type="nucleotide sequence ID" value="XM_047423597.1"/>
</dbReference>
<dbReference type="RefSeq" id="XP_047279554.1">
    <property type="nucleotide sequence ID" value="XM_047423598.1"/>
</dbReference>
<dbReference type="RefSeq" id="XP_047279555.1">
    <property type="nucleotide sequence ID" value="XM_047423599.1"/>
</dbReference>
<dbReference type="RefSeq" id="XP_047279556.1">
    <property type="nucleotide sequence ID" value="XM_047423600.1"/>
</dbReference>
<dbReference type="RefSeq" id="XP_047279557.1">
    <property type="nucleotide sequence ID" value="XM_047423601.1"/>
</dbReference>
<dbReference type="RefSeq" id="XP_054219265.1">
    <property type="nucleotide sequence ID" value="XM_054363290.1"/>
</dbReference>
<dbReference type="RefSeq" id="XP_054219266.1">
    <property type="nucleotide sequence ID" value="XM_054363291.1"/>
</dbReference>
<dbReference type="RefSeq" id="XP_054219267.1">
    <property type="nucleotide sequence ID" value="XM_054363292.1"/>
</dbReference>
<dbReference type="RefSeq" id="XP_054219268.1">
    <property type="nucleotide sequence ID" value="XM_054363293.1"/>
</dbReference>
<dbReference type="RefSeq" id="XP_054219269.1">
    <property type="nucleotide sequence ID" value="XM_054363294.1"/>
</dbReference>
<dbReference type="RefSeq" id="XP_054219270.1">
    <property type="nucleotide sequence ID" value="XM_054363295.1"/>
</dbReference>
<dbReference type="RefSeq" id="XP_054219271.1">
    <property type="nucleotide sequence ID" value="XM_054363296.1"/>
</dbReference>
<dbReference type="RefSeq" id="XP_054219272.1">
    <property type="nucleotide sequence ID" value="XM_054363297.1"/>
</dbReference>
<dbReference type="RefSeq" id="XP_054219273.1">
    <property type="nucleotide sequence ID" value="XM_054363298.1"/>
</dbReference>
<dbReference type="RefSeq" id="XP_054219274.1">
    <property type="nucleotide sequence ID" value="XM_054363299.1"/>
</dbReference>
<dbReference type="RefSeq" id="XP_054219275.1">
    <property type="nucleotide sequence ID" value="XM_054363300.1"/>
</dbReference>
<dbReference type="RefSeq" id="XP_054219276.1">
    <property type="nucleotide sequence ID" value="XM_054363301.1"/>
</dbReference>
<dbReference type="PDB" id="5ZSU">
    <property type="method" value="EM"/>
    <property type="resolution" value="4.25 A"/>
    <property type="chains" value="A/B/C/D/E/F=1-810"/>
</dbReference>
<dbReference type="PDB" id="6DJB">
    <property type="method" value="EM"/>
    <property type="resolution" value="4.40 A"/>
    <property type="chains" value="A/B/C/D/E/F=1-810"/>
</dbReference>
<dbReference type="PDB" id="7XZH">
    <property type="method" value="EM"/>
    <property type="resolution" value="2.78 A"/>
    <property type="chains" value="A/B/C/D/E/F=1-808"/>
</dbReference>
<dbReference type="PDB" id="8DXN">
    <property type="method" value="EM"/>
    <property type="resolution" value="3.40 A"/>
    <property type="chains" value="A/B/C/D/E/F/G=1-6, A/B/C/D/E/F/G=182-206"/>
</dbReference>
<dbReference type="PDB" id="8DXO">
    <property type="method" value="EM"/>
    <property type="resolution" value="3.60 A"/>
    <property type="chains" value="A/B/C/D/E/F/G=1-6, A/B/C/D/E/F/G=182-206"/>
</dbReference>
<dbReference type="PDB" id="8DXP">
    <property type="method" value="EM"/>
    <property type="resolution" value="3.70 A"/>
    <property type="chains" value="A/B/C/D/E/F/G=182-206"/>
</dbReference>
<dbReference type="PDB" id="8DXQ">
    <property type="method" value="EM"/>
    <property type="resolution" value="3.80 A"/>
    <property type="chains" value="A/B/C/D/E/F/G=182-206"/>
</dbReference>
<dbReference type="PDB" id="8DXR">
    <property type="method" value="EM"/>
    <property type="resolution" value="4.00 A"/>
    <property type="chains" value="A/B/C/D/E/F/G=182-206"/>
</dbReference>
<dbReference type="PDBsum" id="5ZSU"/>
<dbReference type="PDBsum" id="6DJB"/>
<dbReference type="PDBsum" id="7XZH"/>
<dbReference type="PDBsum" id="8DXN"/>
<dbReference type="PDBsum" id="8DXO"/>
<dbReference type="PDBsum" id="8DXP"/>
<dbReference type="PDBsum" id="8DXQ"/>
<dbReference type="PDBsum" id="8DXR"/>
<dbReference type="EMDB" id="EMD-33527"/>
<dbReference type="EMDB" id="EMD-6952"/>
<dbReference type="EMDB" id="EMD-7935"/>
<dbReference type="SMR" id="Q8IWT6"/>
<dbReference type="BioGRID" id="121126">
    <property type="interactions" value="101"/>
</dbReference>
<dbReference type="CORUM" id="Q8IWT6"/>
<dbReference type="DIP" id="DIP-61360N"/>
<dbReference type="FunCoup" id="Q8IWT6">
    <property type="interactions" value="1001"/>
</dbReference>
<dbReference type="IntAct" id="Q8IWT6">
    <property type="interactions" value="53"/>
</dbReference>
<dbReference type="MINT" id="Q8IWT6"/>
<dbReference type="STRING" id="9606.ENSP00000259324"/>
<dbReference type="TCDB" id="1.A.25.3.1">
    <property type="family name" value="the gap junction-forming innexin (innexin) family"/>
</dbReference>
<dbReference type="GlyCosmos" id="Q8IWT6">
    <property type="glycosylation" value="3 sites, 1 glycan"/>
</dbReference>
<dbReference type="GlyGen" id="Q8IWT6">
    <property type="glycosylation" value="3 sites, 6 N-linked glycans (2 sites), 1 O-linked glycan (1 site)"/>
</dbReference>
<dbReference type="iPTMnet" id="Q8IWT6"/>
<dbReference type="PhosphoSitePlus" id="Q8IWT6"/>
<dbReference type="SwissPalm" id="Q8IWT6"/>
<dbReference type="BioMuta" id="LRRC8A"/>
<dbReference type="DMDM" id="37537912"/>
<dbReference type="jPOST" id="Q8IWT6"/>
<dbReference type="MassIVE" id="Q8IWT6"/>
<dbReference type="PaxDb" id="9606-ENSP00000259324"/>
<dbReference type="PeptideAtlas" id="Q8IWT6"/>
<dbReference type="ProteomicsDB" id="70893"/>
<dbReference type="Pumba" id="Q8IWT6"/>
<dbReference type="Antibodypedia" id="17736">
    <property type="antibodies" value="173 antibodies from 23 providers"/>
</dbReference>
<dbReference type="DNASU" id="56262"/>
<dbReference type="Ensembl" id="ENST00000259324.5">
    <property type="protein sequence ID" value="ENSP00000259324.5"/>
    <property type="gene ID" value="ENSG00000136802.12"/>
</dbReference>
<dbReference type="Ensembl" id="ENST00000372599.7">
    <property type="protein sequence ID" value="ENSP00000361680.3"/>
    <property type="gene ID" value="ENSG00000136802.12"/>
</dbReference>
<dbReference type="Ensembl" id="ENST00000372600.9">
    <property type="protein sequence ID" value="ENSP00000361682.4"/>
    <property type="gene ID" value="ENSG00000136802.12"/>
</dbReference>
<dbReference type="GeneID" id="56262"/>
<dbReference type="KEGG" id="hsa:56262"/>
<dbReference type="MANE-Select" id="ENST00000372600.9">
    <property type="protein sequence ID" value="ENSP00000361682.4"/>
    <property type="RefSeq nucleotide sequence ID" value="NM_019594.4"/>
    <property type="RefSeq protein sequence ID" value="NP_062540.2"/>
</dbReference>
<dbReference type="UCSC" id="uc004bwl.5">
    <property type="organism name" value="human"/>
</dbReference>
<dbReference type="AGR" id="HGNC:19027"/>
<dbReference type="CTD" id="56262"/>
<dbReference type="DisGeNET" id="56262"/>
<dbReference type="GeneCards" id="LRRC8A"/>
<dbReference type="HGNC" id="HGNC:19027">
    <property type="gene designation" value="LRRC8A"/>
</dbReference>
<dbReference type="HPA" id="ENSG00000136802">
    <property type="expression patterns" value="Low tissue specificity"/>
</dbReference>
<dbReference type="MalaCards" id="LRRC8A"/>
<dbReference type="MIM" id="608360">
    <property type="type" value="gene"/>
</dbReference>
<dbReference type="MIM" id="613506">
    <property type="type" value="phenotype"/>
</dbReference>
<dbReference type="neXtProt" id="NX_Q8IWT6"/>
<dbReference type="OpenTargets" id="ENSG00000136802"/>
<dbReference type="Orphanet" id="33110">
    <property type="disease" value="Autosomal non-syndromic agammaglobulinemia"/>
</dbReference>
<dbReference type="PharmGKB" id="PA134909315"/>
<dbReference type="VEuPathDB" id="HostDB:ENSG00000136802"/>
<dbReference type="eggNOG" id="KOG0619">
    <property type="taxonomic scope" value="Eukaryota"/>
</dbReference>
<dbReference type="GeneTree" id="ENSGT00940000154043"/>
<dbReference type="HOGENOM" id="CLU_019019_0_0_1"/>
<dbReference type="InParanoid" id="Q8IWT6"/>
<dbReference type="OMA" id="CKWILND"/>
<dbReference type="OrthoDB" id="660555at2759"/>
<dbReference type="PAN-GO" id="Q8IWT6">
    <property type="GO annotations" value="0 GO annotations based on evolutionary models"/>
</dbReference>
<dbReference type="PhylomeDB" id="Q8IWT6"/>
<dbReference type="TreeFam" id="TF331443"/>
<dbReference type="PathwayCommons" id="Q8IWT6"/>
<dbReference type="Reactome" id="R-HSA-5223345">
    <property type="pathway name" value="Miscellaneous transport and binding events"/>
</dbReference>
<dbReference type="SignaLink" id="Q8IWT6"/>
<dbReference type="BioGRID-ORCS" id="56262">
    <property type="hits" value="26 hits in 1173 CRISPR screens"/>
</dbReference>
<dbReference type="CD-CODE" id="FB4E32DD">
    <property type="entry name" value="Presynaptic clusters and postsynaptic densities"/>
</dbReference>
<dbReference type="ChiTaRS" id="LRRC8A">
    <property type="organism name" value="human"/>
</dbReference>
<dbReference type="GeneWiki" id="LRRC8A"/>
<dbReference type="GenomeRNAi" id="56262"/>
<dbReference type="Pharos" id="Q8IWT6">
    <property type="development level" value="Tbio"/>
</dbReference>
<dbReference type="PRO" id="PR:Q8IWT6"/>
<dbReference type="Proteomes" id="UP000005640">
    <property type="component" value="Chromosome 9"/>
</dbReference>
<dbReference type="RNAct" id="Q8IWT6">
    <property type="molecule type" value="protein"/>
</dbReference>
<dbReference type="Bgee" id="ENSG00000136802">
    <property type="expression patterns" value="Expressed in gingival epithelium and 189 other cell types or tissues"/>
</dbReference>
<dbReference type="ExpressionAtlas" id="Q8IWT6">
    <property type="expression patterns" value="baseline and differential"/>
</dbReference>
<dbReference type="GO" id="GO:0009986">
    <property type="term" value="C:cell surface"/>
    <property type="evidence" value="ECO:0000314"/>
    <property type="project" value="MGI"/>
</dbReference>
<dbReference type="GO" id="GO:0005737">
    <property type="term" value="C:cytoplasm"/>
    <property type="evidence" value="ECO:0000318"/>
    <property type="project" value="GO_Central"/>
</dbReference>
<dbReference type="GO" id="GO:0005765">
    <property type="term" value="C:lysosomal membrane"/>
    <property type="evidence" value="ECO:0000314"/>
    <property type="project" value="UniProtKB"/>
</dbReference>
<dbReference type="GO" id="GO:0016020">
    <property type="term" value="C:membrane"/>
    <property type="evidence" value="ECO:0000314"/>
    <property type="project" value="UniProtKB"/>
</dbReference>
<dbReference type="GO" id="GO:0034702">
    <property type="term" value="C:monoatomic ion channel complex"/>
    <property type="evidence" value="ECO:0000314"/>
    <property type="project" value="UniProtKB"/>
</dbReference>
<dbReference type="GO" id="GO:0005886">
    <property type="term" value="C:plasma membrane"/>
    <property type="evidence" value="ECO:0000314"/>
    <property type="project" value="UniProtKB"/>
</dbReference>
<dbReference type="GO" id="GO:0140360">
    <property type="term" value="F:cyclic-GMP-AMP transmembrane transporter activity"/>
    <property type="evidence" value="ECO:0000314"/>
    <property type="project" value="UniProtKB"/>
</dbReference>
<dbReference type="GO" id="GO:0042802">
    <property type="term" value="F:identical protein binding"/>
    <property type="evidence" value="ECO:0000353"/>
    <property type="project" value="IntAct"/>
</dbReference>
<dbReference type="GO" id="GO:0005225">
    <property type="term" value="F:volume-sensitive anion channel activity"/>
    <property type="evidence" value="ECO:0000314"/>
    <property type="project" value="UniProtKB"/>
</dbReference>
<dbReference type="GO" id="GO:0015810">
    <property type="term" value="P:aspartate transmembrane transport"/>
    <property type="evidence" value="ECO:0000318"/>
    <property type="project" value="GO_Central"/>
</dbReference>
<dbReference type="GO" id="GO:0006884">
    <property type="term" value="P:cell volume homeostasis"/>
    <property type="evidence" value="ECO:0000314"/>
    <property type="project" value="UniProtKB"/>
</dbReference>
<dbReference type="GO" id="GO:1902476">
    <property type="term" value="P:chloride transmembrane transport"/>
    <property type="evidence" value="ECO:0000314"/>
    <property type="project" value="UniProtKB"/>
</dbReference>
<dbReference type="GO" id="GO:0140361">
    <property type="term" value="P:cyclic-GMP-AMP transmembrane import across plasma membrane"/>
    <property type="evidence" value="ECO:0000314"/>
    <property type="project" value="UniProtKB"/>
</dbReference>
<dbReference type="GO" id="GO:0001678">
    <property type="term" value="P:intracellular glucose homeostasis"/>
    <property type="evidence" value="ECO:0000250"/>
    <property type="project" value="UniProtKB"/>
</dbReference>
<dbReference type="GO" id="GO:0035556">
    <property type="term" value="P:intracellular signal transduction"/>
    <property type="evidence" value="ECO:0000318"/>
    <property type="project" value="GO_Central"/>
</dbReference>
<dbReference type="GO" id="GO:0098656">
    <property type="term" value="P:monoatomic anion transmembrane transport"/>
    <property type="evidence" value="ECO:0000314"/>
    <property type="project" value="UniProtKB"/>
</dbReference>
<dbReference type="GO" id="GO:0006820">
    <property type="term" value="P:monoatomic anion transport"/>
    <property type="evidence" value="ECO:0000315"/>
    <property type="project" value="UniProtKB"/>
</dbReference>
<dbReference type="GO" id="GO:0032024">
    <property type="term" value="P:positive regulation of insulin secretion"/>
    <property type="evidence" value="ECO:0000250"/>
    <property type="project" value="UniProtKB"/>
</dbReference>
<dbReference type="GO" id="GO:0045663">
    <property type="term" value="P:positive regulation of myoblast differentiation"/>
    <property type="evidence" value="ECO:0000250"/>
    <property type="project" value="UniProtKB"/>
</dbReference>
<dbReference type="GO" id="GO:0002329">
    <property type="term" value="P:pre-B cell differentiation"/>
    <property type="evidence" value="ECO:0000250"/>
    <property type="project" value="UniProtKB"/>
</dbReference>
<dbReference type="GO" id="GO:0034214">
    <property type="term" value="P:protein hexamerization"/>
    <property type="evidence" value="ECO:0000314"/>
    <property type="project" value="UniProtKB"/>
</dbReference>
<dbReference type="GO" id="GO:0006970">
    <property type="term" value="P:response to osmotic stress"/>
    <property type="evidence" value="ECO:0000315"/>
    <property type="project" value="UniProtKB"/>
</dbReference>
<dbReference type="GO" id="GO:0007283">
    <property type="term" value="P:spermatogenesis"/>
    <property type="evidence" value="ECO:0000250"/>
    <property type="project" value="UniProtKB"/>
</dbReference>
<dbReference type="GO" id="GO:0015734">
    <property type="term" value="P:taurine transmembrane transport"/>
    <property type="evidence" value="ECO:0007669"/>
    <property type="project" value="Ensembl"/>
</dbReference>
<dbReference type="FunFam" id="3.80.10.10:FF:000223">
    <property type="entry name" value="Leucine-rich repeat-containing 8 VRAC subunit A"/>
    <property type="match status" value="1"/>
</dbReference>
<dbReference type="FunFam" id="3.80.10.10:FF:000871">
    <property type="entry name" value="volume-regulated anion channel subunit LRRC8A"/>
    <property type="match status" value="1"/>
</dbReference>
<dbReference type="Gene3D" id="3.80.10.10">
    <property type="entry name" value="Ribonuclease Inhibitor"/>
    <property type="match status" value="2"/>
</dbReference>
<dbReference type="InterPro" id="IPR001611">
    <property type="entry name" value="Leu-rich_rpt"/>
</dbReference>
<dbReference type="InterPro" id="IPR003591">
    <property type="entry name" value="Leu-rich_rpt_typical-subtyp"/>
</dbReference>
<dbReference type="InterPro" id="IPR032675">
    <property type="entry name" value="LRR_dom_sf"/>
</dbReference>
<dbReference type="InterPro" id="IPR050216">
    <property type="entry name" value="LRR_domain-containing"/>
</dbReference>
<dbReference type="InterPro" id="IPR055414">
    <property type="entry name" value="LRR_R13L4/SHOC2-like"/>
</dbReference>
<dbReference type="InterPro" id="IPR021040">
    <property type="entry name" value="LRRC8_Pannexin-like"/>
</dbReference>
<dbReference type="PANTHER" id="PTHR48051">
    <property type="match status" value="1"/>
</dbReference>
<dbReference type="PANTHER" id="PTHR48051:SF1">
    <property type="entry name" value="RAS SUPPRESSOR PROTEIN 1"/>
    <property type="match status" value="1"/>
</dbReference>
<dbReference type="Pfam" id="PF23598">
    <property type="entry name" value="LRR_14"/>
    <property type="match status" value="1"/>
</dbReference>
<dbReference type="Pfam" id="PF13855">
    <property type="entry name" value="LRR_8"/>
    <property type="match status" value="1"/>
</dbReference>
<dbReference type="Pfam" id="PF12534">
    <property type="entry name" value="Pannexin_like"/>
    <property type="match status" value="1"/>
</dbReference>
<dbReference type="SMART" id="SM00365">
    <property type="entry name" value="LRR_SD22"/>
    <property type="match status" value="3"/>
</dbReference>
<dbReference type="SMART" id="SM00369">
    <property type="entry name" value="LRR_TYP"/>
    <property type="match status" value="8"/>
</dbReference>
<dbReference type="SUPFAM" id="SSF52058">
    <property type="entry name" value="L domain-like"/>
    <property type="match status" value="1"/>
</dbReference>
<dbReference type="PROSITE" id="PS51450">
    <property type="entry name" value="LRR"/>
    <property type="match status" value="11"/>
</dbReference>
<feature type="chain" id="PRO_0000084499" description="Volume-regulated anion channel subunit LRRC8A">
    <location>
        <begin position="1"/>
        <end position="810"/>
    </location>
</feature>
<feature type="topological domain" description="Cytoplasmic" evidence="30">
    <location>
        <begin position="1"/>
        <end position="23"/>
    </location>
</feature>
<feature type="transmembrane region" description="Helical; Name=1" evidence="34 35 37 38">
    <location>
        <begin position="24"/>
        <end position="47"/>
    </location>
</feature>
<feature type="topological domain" description="Extracellular" evidence="30">
    <location>
        <begin position="48"/>
        <end position="123"/>
    </location>
</feature>
<feature type="transmembrane region" description="Helical; Name=2" evidence="34 35 37 38">
    <location>
        <begin position="124"/>
        <end position="142"/>
    </location>
</feature>
<feature type="topological domain" description="Cytoplasmic" evidence="30">
    <location>
        <begin position="143"/>
        <end position="264"/>
    </location>
</feature>
<feature type="transmembrane region" description="Helical; Name=3" evidence="34 35 37 38">
    <location>
        <begin position="265"/>
        <end position="286"/>
    </location>
</feature>
<feature type="topological domain" description="Extracellular" evidence="30">
    <location>
        <begin position="287"/>
        <end position="316"/>
    </location>
</feature>
<feature type="transmembrane region" description="Helical; Name=4" evidence="34 35 37 38">
    <location>
        <begin position="317"/>
        <end position="341"/>
    </location>
</feature>
<feature type="topological domain" description="Cytoplasmic" evidence="31">
    <location>
        <begin position="342"/>
        <end position="810"/>
    </location>
</feature>
<feature type="repeat" description="LRR 1" evidence="3">
    <location>
        <begin position="399"/>
        <end position="422"/>
    </location>
</feature>
<feature type="repeat" description="LRR 2" evidence="3">
    <location>
        <begin position="423"/>
        <end position="445"/>
    </location>
</feature>
<feature type="repeat" description="LRR 3" evidence="3">
    <location>
        <begin position="447"/>
        <end position="468"/>
    </location>
</feature>
<feature type="repeat" description="LRR 4" evidence="3">
    <location>
        <begin position="469"/>
        <end position="492"/>
    </location>
</feature>
<feature type="repeat" description="LRR 5" evidence="3">
    <location>
        <begin position="493"/>
        <end position="515"/>
    </location>
</feature>
<feature type="repeat" description="LRR 6" evidence="3">
    <location>
        <begin position="518"/>
        <end position="542"/>
    </location>
</feature>
<feature type="repeat" description="LRR 7" evidence="3">
    <location>
        <begin position="543"/>
        <end position="565"/>
    </location>
</feature>
<feature type="repeat" description="LRR 8" evidence="3">
    <location>
        <begin position="567"/>
        <end position="589"/>
    </location>
</feature>
<feature type="repeat" description="LRR 9" evidence="3">
    <location>
        <begin position="590"/>
        <end position="613"/>
    </location>
</feature>
<feature type="repeat" description="LRR 10" evidence="3">
    <location>
        <begin position="615"/>
        <end position="637"/>
    </location>
</feature>
<feature type="repeat" description="LRR 11" evidence="3">
    <location>
        <begin position="639"/>
        <end position="661"/>
    </location>
</feature>
<feature type="repeat" description="LRR 12" evidence="3">
    <location>
        <begin position="662"/>
        <end position="684"/>
    </location>
</feature>
<feature type="repeat" description="LRR 13" evidence="3">
    <location>
        <begin position="686"/>
        <end position="707"/>
    </location>
</feature>
<feature type="repeat" description="LRR 14" evidence="3">
    <location>
        <begin position="708"/>
        <end position="730"/>
    </location>
</feature>
<feature type="repeat" description="LRR 15" evidence="3">
    <location>
        <begin position="732"/>
        <end position="753"/>
    </location>
</feature>
<feature type="repeat" description="LRR 16" evidence="3">
    <location>
        <begin position="754"/>
        <end position="776"/>
    </location>
</feature>
<feature type="repeat" description="LRR 17" evidence="3">
    <location>
        <begin position="778"/>
        <end position="801"/>
    </location>
</feature>
<feature type="short sequence motif" description="Di-leucine motif" evidence="19">
    <location>
        <begin position="706"/>
        <end position="707"/>
    </location>
</feature>
<feature type="site" description="Required for anion selectivity" evidence="15">
    <location>
        <position position="103"/>
    </location>
</feature>
<feature type="modified residue" description="N-acetylmethionine" evidence="22 46">
    <location>
        <position position="1"/>
    </location>
</feature>
<feature type="modified residue" description="Phosphothreonine" evidence="2">
    <location>
        <position position="200"/>
    </location>
</feature>
<feature type="modified residue" description="Phosphoserine" evidence="2">
    <location>
        <position position="202"/>
    </location>
</feature>
<feature type="modified residue" description="Phosphothreonine" evidence="47">
    <location>
        <position position="215"/>
    </location>
</feature>
<feature type="modified residue" description="Phosphoserine" evidence="44 45 47">
    <location>
        <position position="217"/>
    </location>
</feature>
<feature type="glycosylation site" description="N-linked (GlcNAc...) asparagine" evidence="3">
    <location>
        <position position="66"/>
    </location>
</feature>
<feature type="glycosylation site" description="N-linked (GlcNAc...) asparagine" evidence="3">
    <location>
        <position position="83"/>
    </location>
</feature>
<feature type="disulfide bond" evidence="15 16 37 38">
    <location>
        <begin position="54"/>
        <end position="310"/>
    </location>
</feature>
<feature type="disulfide bond" evidence="15 38">
    <location>
        <begin position="57"/>
        <end position="65"/>
    </location>
</feature>
<feature type="disulfide bond" evidence="15 16 37 38">
    <location>
        <begin position="113"/>
        <end position="295"/>
    </location>
</feature>
<feature type="sequence variant" id="VAR_084194" description="Found in a patient with Sertoli cell-only syndrome; uncertain significance; dbSNP:rs769167142." evidence="17">
    <original>R</original>
    <variation>H</variation>
    <location>
        <position position="545"/>
    </location>
</feature>
<feature type="mutagenesis site" description="No effect." evidence="15">
    <original>T</original>
    <variation>C</variation>
    <location>
        <position position="5"/>
    </location>
</feature>
<feature type="mutagenesis site" description="Anion channel is more selective to iodite compared to chloride." evidence="15">
    <original>T</original>
    <variation>R</variation>
    <location>
        <position position="5"/>
    </location>
</feature>
<feature type="mutagenesis site" description="Decreased amplitudes of swelling-activated currents." evidence="14">
    <original>E</original>
    <variation>C</variation>
    <location>
        <position position="6"/>
    </location>
</feature>
<feature type="mutagenesis site" description="Altered anion selectivity." evidence="6">
    <original>T</original>
    <variation>A</variation>
    <variation>C</variation>
    <location>
        <position position="44"/>
    </location>
</feature>
<feature type="mutagenesis site" description="Abolishes N-glycosylation; when associated with A-83." evidence="8">
    <original>N</original>
    <variation>A</variation>
    <location>
        <position position="66"/>
    </location>
</feature>
<feature type="mutagenesis site" description="Abolishes N-glycosylation; when associated with A-66." evidence="8">
    <original>N</original>
    <variation>A</variation>
    <location>
        <position position="83"/>
    </location>
</feature>
<feature type="mutagenesis site" description="Affects ion selectivity of the channel." evidence="15">
    <original>R</original>
    <variation>F</variation>
    <location>
        <position position="103"/>
    </location>
</feature>
<feature type="mutagenesis site" description="Abolished ability to transport 2'-3'-cGAMP." evidence="20">
    <original>R</original>
    <variation>L</variation>
    <location>
        <position position="103"/>
    </location>
</feature>
<feature type="mutagenesis site" description="Abolished localization to lysosomes." evidence="19">
    <original>LL</original>
    <variation>AA</variation>
    <location>
        <begin position="706"/>
        <end position="707"/>
    </location>
</feature>
<feature type="sequence conflict" description="In Ref. 7; BAC11161." evidence="30" ref="7">
    <original>S</original>
    <variation>P</variation>
    <location>
        <position position="323"/>
    </location>
</feature>
<feature type="sequence conflict" description="In Ref. 7; BAC11161." evidence="30" ref="7">
    <original>Q</original>
    <variation>R</variation>
    <location>
        <position position="744"/>
    </location>
</feature>
<feature type="helix" evidence="48">
    <location>
        <begin position="4"/>
        <end position="7"/>
    </location>
</feature>
<feature type="turn" evidence="48">
    <location>
        <begin position="8"/>
        <end position="10"/>
    </location>
</feature>
<feature type="helix" evidence="48">
    <location>
        <begin position="15"/>
        <end position="20"/>
    </location>
</feature>
<feature type="helix" evidence="48">
    <location>
        <begin position="23"/>
        <end position="48"/>
    </location>
</feature>
<feature type="strand" evidence="48">
    <location>
        <begin position="53"/>
        <end position="56"/>
    </location>
</feature>
<feature type="strand" evidence="48">
    <location>
        <begin position="58"/>
        <end position="61"/>
    </location>
</feature>
<feature type="helix" evidence="48">
    <location>
        <begin position="103"/>
        <end position="116"/>
    </location>
</feature>
<feature type="helix" evidence="48">
    <location>
        <begin position="120"/>
        <end position="145"/>
    </location>
</feature>
<feature type="helix" evidence="48">
    <location>
        <begin position="147"/>
        <end position="165"/>
    </location>
</feature>
<feature type="helix" evidence="48">
    <location>
        <begin position="167"/>
        <end position="171"/>
    </location>
</feature>
<feature type="helix" evidence="48">
    <location>
        <begin position="234"/>
        <end position="254"/>
    </location>
</feature>
<feature type="helix" evidence="48">
    <location>
        <begin position="259"/>
        <end position="285"/>
    </location>
</feature>
<feature type="helix" evidence="48">
    <location>
        <begin position="286"/>
        <end position="288"/>
    </location>
</feature>
<feature type="strand" evidence="48">
    <location>
        <begin position="294"/>
        <end position="296"/>
    </location>
</feature>
<feature type="turn" evidence="48">
    <location>
        <begin position="300"/>
        <end position="302"/>
    </location>
</feature>
<feature type="strand" evidence="48">
    <location>
        <begin position="306"/>
        <end position="311"/>
    </location>
</feature>
<feature type="helix" evidence="48">
    <location>
        <begin position="315"/>
        <end position="344"/>
    </location>
</feature>
<feature type="turn" evidence="48">
    <location>
        <begin position="345"/>
        <end position="349"/>
    </location>
</feature>
<feature type="helix" evidence="48">
    <location>
        <begin position="356"/>
        <end position="359"/>
    </location>
</feature>
<feature type="turn" evidence="48">
    <location>
        <begin position="370"/>
        <end position="372"/>
    </location>
</feature>
<feature type="helix" evidence="48">
    <location>
        <begin position="373"/>
        <end position="380"/>
    </location>
</feature>
<feature type="helix" evidence="48">
    <location>
        <begin position="384"/>
        <end position="390"/>
    </location>
</feature>
<feature type="helix" evidence="48">
    <location>
        <begin position="391"/>
        <end position="394"/>
    </location>
</feature>
<feature type="helix" evidence="48">
    <location>
        <begin position="396"/>
        <end position="410"/>
    </location>
</feature>
<feature type="helix" evidence="48">
    <location>
        <begin position="413"/>
        <end position="419"/>
    </location>
</feature>
<feature type="strand" evidence="48">
    <location>
        <begin position="428"/>
        <end position="434"/>
    </location>
</feature>
<feature type="helix" evidence="48">
    <location>
        <begin position="440"/>
        <end position="444"/>
    </location>
</feature>
<feature type="strand" evidence="48">
    <location>
        <begin position="450"/>
        <end position="455"/>
    </location>
</feature>
<feature type="strand" evidence="48">
    <location>
        <begin position="458"/>
        <end position="460"/>
    </location>
</feature>
<feature type="helix" evidence="48">
    <location>
        <begin position="463"/>
        <end position="467"/>
    </location>
</feature>
<feature type="strand" evidence="48">
    <location>
        <begin position="473"/>
        <end position="478"/>
    </location>
</feature>
<feature type="helix" evidence="48">
    <location>
        <begin position="485"/>
        <end position="493"/>
    </location>
</feature>
<feature type="strand" evidence="48">
    <location>
        <begin position="496"/>
        <end position="501"/>
    </location>
</feature>
<feature type="helix" evidence="48">
    <location>
        <begin position="505"/>
        <end position="507"/>
    </location>
</feature>
<feature type="helix" evidence="48">
    <location>
        <begin position="510"/>
        <end position="514"/>
    </location>
</feature>
<feature type="strand" evidence="48">
    <location>
        <begin position="520"/>
        <end position="525"/>
    </location>
</feature>
<feature type="helix" evidence="48">
    <location>
        <begin position="538"/>
        <end position="542"/>
    </location>
</feature>
<feature type="strand" evidence="48">
    <location>
        <begin position="548"/>
        <end position="553"/>
    </location>
</feature>
<feature type="helix" evidence="48">
    <location>
        <begin position="560"/>
        <end position="565"/>
    </location>
</feature>
<feature type="turn" evidence="48">
    <location>
        <begin position="566"/>
        <end position="568"/>
    </location>
</feature>
<feature type="strand" evidence="48">
    <location>
        <begin position="571"/>
        <end position="575"/>
    </location>
</feature>
<feature type="helix" evidence="48">
    <location>
        <begin position="587"/>
        <end position="589"/>
    </location>
</feature>
<feature type="strand" evidence="48">
    <location>
        <begin position="595"/>
        <end position="600"/>
    </location>
</feature>
<feature type="helix" evidence="48">
    <location>
        <begin position="608"/>
        <end position="612"/>
    </location>
</feature>
<feature type="strand" evidence="48">
    <location>
        <begin position="618"/>
        <end position="620"/>
    </location>
</feature>
<feature type="helix" evidence="48">
    <location>
        <begin position="630"/>
        <end position="637"/>
    </location>
</feature>
<feature type="strand" evidence="48">
    <location>
        <begin position="643"/>
        <end position="645"/>
    </location>
</feature>
<feature type="helix" evidence="48">
    <location>
        <begin position="656"/>
        <end position="660"/>
    </location>
</feature>
<feature type="strand" evidence="48">
    <location>
        <begin position="666"/>
        <end position="668"/>
    </location>
</feature>
<feature type="helix" evidence="48">
    <location>
        <begin position="679"/>
        <end position="683"/>
    </location>
</feature>
<feature type="strand" evidence="48">
    <location>
        <begin position="689"/>
        <end position="691"/>
    </location>
</feature>
<feature type="helix" evidence="48">
    <location>
        <begin position="702"/>
        <end position="706"/>
    </location>
</feature>
<feature type="strand" evidence="48">
    <location>
        <begin position="712"/>
        <end position="714"/>
    </location>
</feature>
<feature type="helix" evidence="48">
    <location>
        <begin position="725"/>
        <end position="729"/>
    </location>
</feature>
<feature type="strand" evidence="48">
    <location>
        <begin position="735"/>
        <end position="737"/>
    </location>
</feature>
<feature type="helix" evidence="48">
    <location>
        <begin position="748"/>
        <end position="752"/>
    </location>
</feature>
<feature type="strand" evidence="48">
    <location>
        <begin position="758"/>
        <end position="760"/>
    </location>
</feature>
<feature type="helix" evidence="48">
    <location>
        <begin position="771"/>
        <end position="775"/>
    </location>
</feature>
<feature type="turn" evidence="48">
    <location>
        <begin position="781"/>
        <end position="783"/>
    </location>
</feature>
<feature type="helix" evidence="48">
    <location>
        <begin position="788"/>
        <end position="792"/>
    </location>
</feature>
<feature type="helix" evidence="48">
    <location>
        <begin position="796"/>
        <end position="806"/>
    </location>
</feature>
<accession>Q8IWT6</accession>
<accession>Q6UXM2</accession>
<accession>Q8NCI0</accession>
<accession>Q9P2B1</accession>
<gene>
    <name evidence="26 36" type="primary">LRRC8A</name>
    <name evidence="23" type="synonym">KIAA1437</name>
    <name evidence="25" type="synonym">LRRC8</name>
    <name evidence="27" type="synonym">SWELL1</name>
    <name evidence="24" type="ORF">UNQ221/PRO247</name>
</gene>